<sequence length="367" mass="41091">MEAERLNAIESSLADLRRRAGELRGYLDYDVKSERLAEVNKQLEDPNVWNDSKNAQALGREKKSLESVVTTLTALDNDLRDAQDLFELAHEEGDEETLVATESDAAKLEARVADIEFRRMFSNPADPNNCFIDIQAGAGGTEACDWASMLLRQYLRYCERKGFKAEVLEESDGDVAGIKNATIKVSGEYAYGYLRTETGIHRLVRKSPFDSSGGRHTSFSSVFVYPEIDDSIEVEINPADLRIDTYRASGAGGQHINKTDSAVRITHMPTGIVVQCQNDRSQHRNRAEAMAMLKSRLFEAELRKRQAEQDKLESSKTDVGWGHQIRSYVLDQSRVKDLRTNVEMSNTKAVLDGDLDDFISASLKQGV</sequence>
<dbReference type="EMBL" id="CP000572">
    <property type="protein sequence ID" value="ABN92528.3"/>
    <property type="molecule type" value="Genomic_DNA"/>
</dbReference>
<dbReference type="RefSeq" id="WP_004199566.1">
    <property type="nucleotide sequence ID" value="NC_009076.1"/>
</dbReference>
<dbReference type="SMR" id="A3NX26"/>
<dbReference type="GeneID" id="93060837"/>
<dbReference type="KEGG" id="bpl:BURPS1106A_2644"/>
<dbReference type="HOGENOM" id="CLU_220733_0_0_4"/>
<dbReference type="Proteomes" id="UP000006738">
    <property type="component" value="Chromosome I"/>
</dbReference>
<dbReference type="GO" id="GO:0005737">
    <property type="term" value="C:cytoplasm"/>
    <property type="evidence" value="ECO:0007669"/>
    <property type="project" value="UniProtKB-SubCell"/>
</dbReference>
<dbReference type="GO" id="GO:0016149">
    <property type="term" value="F:translation release factor activity, codon specific"/>
    <property type="evidence" value="ECO:0007669"/>
    <property type="project" value="UniProtKB-UniRule"/>
</dbReference>
<dbReference type="FunFam" id="3.30.160.20:FF:000010">
    <property type="entry name" value="Peptide chain release factor 2"/>
    <property type="match status" value="1"/>
</dbReference>
<dbReference type="Gene3D" id="3.30.160.20">
    <property type="match status" value="1"/>
</dbReference>
<dbReference type="Gene3D" id="3.30.70.1660">
    <property type="match status" value="1"/>
</dbReference>
<dbReference type="Gene3D" id="1.20.58.410">
    <property type="entry name" value="Release factor"/>
    <property type="match status" value="1"/>
</dbReference>
<dbReference type="HAMAP" id="MF_00094">
    <property type="entry name" value="Rel_fac_2"/>
    <property type="match status" value="1"/>
</dbReference>
<dbReference type="InterPro" id="IPR005139">
    <property type="entry name" value="PCRF"/>
</dbReference>
<dbReference type="InterPro" id="IPR000352">
    <property type="entry name" value="Pep_chain_release_fac_I"/>
</dbReference>
<dbReference type="InterPro" id="IPR045853">
    <property type="entry name" value="Pep_chain_release_fac_I_sf"/>
</dbReference>
<dbReference type="InterPro" id="IPR004374">
    <property type="entry name" value="PrfB"/>
</dbReference>
<dbReference type="NCBIfam" id="TIGR00020">
    <property type="entry name" value="prfB"/>
    <property type="match status" value="1"/>
</dbReference>
<dbReference type="PANTHER" id="PTHR43116:SF3">
    <property type="entry name" value="CLASS I PEPTIDE CHAIN RELEASE FACTOR"/>
    <property type="match status" value="1"/>
</dbReference>
<dbReference type="PANTHER" id="PTHR43116">
    <property type="entry name" value="PEPTIDE CHAIN RELEASE FACTOR 2"/>
    <property type="match status" value="1"/>
</dbReference>
<dbReference type="Pfam" id="PF03462">
    <property type="entry name" value="PCRF"/>
    <property type="match status" value="1"/>
</dbReference>
<dbReference type="Pfam" id="PF00472">
    <property type="entry name" value="RF-1"/>
    <property type="match status" value="1"/>
</dbReference>
<dbReference type="SMART" id="SM00937">
    <property type="entry name" value="PCRF"/>
    <property type="match status" value="1"/>
</dbReference>
<dbReference type="SUPFAM" id="SSF75620">
    <property type="entry name" value="Release factor"/>
    <property type="match status" value="1"/>
</dbReference>
<dbReference type="PROSITE" id="PS00745">
    <property type="entry name" value="RF_PROK_I"/>
    <property type="match status" value="1"/>
</dbReference>
<name>RF2_BURP0</name>
<keyword id="KW-0963">Cytoplasm</keyword>
<keyword id="KW-0488">Methylation</keyword>
<keyword id="KW-0648">Protein biosynthesis</keyword>
<proteinExistence type="inferred from homology"/>
<accession>A3NX26</accession>
<gene>
    <name evidence="1" type="primary">prfB</name>
    <name type="ordered locus">BURPS1106A_2644</name>
</gene>
<organism>
    <name type="scientific">Burkholderia pseudomallei (strain 1106a)</name>
    <dbReference type="NCBI Taxonomy" id="357348"/>
    <lineage>
        <taxon>Bacteria</taxon>
        <taxon>Pseudomonadati</taxon>
        <taxon>Pseudomonadota</taxon>
        <taxon>Betaproteobacteria</taxon>
        <taxon>Burkholderiales</taxon>
        <taxon>Burkholderiaceae</taxon>
        <taxon>Burkholderia</taxon>
        <taxon>pseudomallei group</taxon>
    </lineage>
</organism>
<protein>
    <recommendedName>
        <fullName evidence="1">Peptide chain release factor 2</fullName>
        <shortName evidence="1">RF-2</shortName>
    </recommendedName>
</protein>
<comment type="function">
    <text evidence="1">Peptide chain release factor 2 directs the termination of translation in response to the peptide chain termination codons UGA and UAA.</text>
</comment>
<comment type="subcellular location">
    <subcellularLocation>
        <location evidence="1">Cytoplasm</location>
    </subcellularLocation>
</comment>
<comment type="PTM">
    <text evidence="1">Methylated by PrmC. Methylation increases the termination efficiency of RF2.</text>
</comment>
<comment type="similarity">
    <text evidence="1">Belongs to the prokaryotic/mitochondrial release factor family.</text>
</comment>
<evidence type="ECO:0000255" key="1">
    <source>
        <dbReference type="HAMAP-Rule" id="MF_00094"/>
    </source>
</evidence>
<reference key="1">
    <citation type="journal article" date="2010" name="Genome Biol. Evol.">
        <title>Continuing evolution of Burkholderia mallei through genome reduction and large-scale rearrangements.</title>
        <authorList>
            <person name="Losada L."/>
            <person name="Ronning C.M."/>
            <person name="DeShazer D."/>
            <person name="Woods D."/>
            <person name="Fedorova N."/>
            <person name="Kim H.S."/>
            <person name="Shabalina S.A."/>
            <person name="Pearson T.R."/>
            <person name="Brinkac L."/>
            <person name="Tan P."/>
            <person name="Nandi T."/>
            <person name="Crabtree J."/>
            <person name="Badger J."/>
            <person name="Beckstrom-Sternberg S."/>
            <person name="Saqib M."/>
            <person name="Schutzer S.E."/>
            <person name="Keim P."/>
            <person name="Nierman W.C."/>
        </authorList>
    </citation>
    <scope>NUCLEOTIDE SEQUENCE [LARGE SCALE GENOMIC DNA]</scope>
    <source>
        <strain>1106a</strain>
    </source>
</reference>
<feature type="chain" id="PRO_1000093534" description="Peptide chain release factor 2">
    <location>
        <begin position="1"/>
        <end position="367"/>
    </location>
</feature>
<feature type="modified residue" description="N5-methylglutamine" evidence="1">
    <location>
        <position position="254"/>
    </location>
</feature>